<proteinExistence type="evidence at protein level"/>
<sequence length="511" mass="56631">MAAVGPRTGPGTGAEALALAAELQGEATCSICLELFREPVSVECGHSFCRACIGRCWERPGAGSVGAATRAPPFPLPCPQCREPARPSQLRPNRQLAAVATLLRRFSLPAAAPGEHGSQAAAARAAAARCGQHGEPFKLYCQDDGRAICVVCDRAREHREHAVLPLDEAVQEAKELLESRLRVLKKELEDCEVFRSTEKKESKELLKQMAAEQEKVGAEFQALRAFLVEQEGRLLGRLEELSREVAQKQNENLAQLGVEITQLSKLSSQIQETAQKPDLDFLQEFKSTLSRCSNVPGPKPTTVSSEMKNKVWNVSLKTFVLKGMLKKFKEDLRGELEKEEKVELTLDPDTANPRLILSLDLKGVRLGERAQDLPNHPCRFDTNTRVLASCGFSSGRHHWEVEVGSKDGWAFGVARESVRRKGLTPFTPEEGVWALQLNGGQYWAVTSPERSPLSCGHLSRVRVALDLEVGAVSFYAVEDMRHLYTFRVNFQERVFPLFSVCSTGTYLRIWP</sequence>
<evidence type="ECO:0000250" key="1">
    <source>
        <dbReference type="UniProtKB" id="Q923T7"/>
    </source>
</evidence>
<evidence type="ECO:0000255" key="2"/>
<evidence type="ECO:0000255" key="3">
    <source>
        <dbReference type="PROSITE-ProRule" id="PRU00024"/>
    </source>
</evidence>
<evidence type="ECO:0000255" key="4">
    <source>
        <dbReference type="PROSITE-ProRule" id="PRU00175"/>
    </source>
</evidence>
<evidence type="ECO:0000255" key="5">
    <source>
        <dbReference type="PROSITE-ProRule" id="PRU00548"/>
    </source>
</evidence>
<evidence type="ECO:0000269" key="6">
    <source>
    </source>
</evidence>
<evidence type="ECO:0000269" key="7">
    <source>
    </source>
</evidence>
<evidence type="ECO:0000269" key="8">
    <source>
    </source>
</evidence>
<evidence type="ECO:0000269" key="9">
    <source>
    </source>
</evidence>
<evidence type="ECO:0000269" key="10">
    <source>
    </source>
</evidence>
<evidence type="ECO:0000269" key="11">
    <source>
    </source>
</evidence>
<evidence type="ECO:0000269" key="12">
    <source>
    </source>
</evidence>
<evidence type="ECO:0000269" key="13">
    <source>
    </source>
</evidence>
<evidence type="ECO:0000269" key="14">
    <source>
    </source>
</evidence>
<evidence type="ECO:0000269" key="15">
    <source>
    </source>
</evidence>
<evidence type="ECO:0000269" key="16">
    <source>
    </source>
</evidence>
<evidence type="ECO:0000269" key="17">
    <source>
    </source>
</evidence>
<evidence type="ECO:0000269" key="18">
    <source>
    </source>
</evidence>
<evidence type="ECO:0000303" key="19">
    <source>
    </source>
</evidence>
<evidence type="ECO:0000303" key="20">
    <source>
    </source>
</evidence>
<evidence type="ECO:0000303" key="21">
    <source>
    </source>
</evidence>
<evidence type="ECO:0000305" key="22"/>
<evidence type="ECO:0007744" key="23">
    <source>
        <dbReference type="PDB" id="6UMA"/>
    </source>
</evidence>
<evidence type="ECO:0007744" key="24">
    <source>
        <dbReference type="PDB" id="6UMB"/>
    </source>
</evidence>
<evidence type="ECO:0007744" key="25">
    <source>
        <dbReference type="PDB" id="7W0Q"/>
    </source>
</evidence>
<evidence type="ECO:0007744" key="26">
    <source>
        <dbReference type="PDB" id="7W0S"/>
    </source>
</evidence>
<evidence type="ECO:0007744" key="27">
    <source>
        <dbReference type="PDB" id="7W0T"/>
    </source>
</evidence>
<evidence type="ECO:0007744" key="28">
    <source>
        <dbReference type="PDB" id="7X6Y"/>
    </source>
</evidence>
<evidence type="ECO:0007744" key="29">
    <source>
        <dbReference type="PDB" id="7X6Z"/>
    </source>
</evidence>
<evidence type="ECO:0007744" key="30">
    <source>
        <dbReference type="PDB" id="7X70"/>
    </source>
</evidence>
<evidence type="ECO:0007744" key="31">
    <source>
        <dbReference type="PDB" id="7Y3A"/>
    </source>
</evidence>
<evidence type="ECO:0007744" key="32">
    <source>
        <dbReference type="PDB" id="7Y3B"/>
    </source>
</evidence>
<evidence type="ECO:0007744" key="33">
    <source>
        <dbReference type="PDB" id="7Y3C"/>
    </source>
</evidence>
<evidence type="ECO:0007744" key="34">
    <source>
        <dbReference type="PDB" id="8A5L"/>
    </source>
</evidence>
<evidence type="ECO:0007744" key="35">
    <source>
        <dbReference type="PDB" id="8A5M"/>
    </source>
</evidence>
<evidence type="ECO:0007744" key="36">
    <source>
        <dbReference type="PDB" id="8A8X"/>
    </source>
</evidence>
<evidence type="ECO:0007829" key="37">
    <source>
        <dbReference type="PDB" id="7W0Q"/>
    </source>
</evidence>
<evidence type="ECO:0007829" key="38">
    <source>
        <dbReference type="PDB" id="7X70"/>
    </source>
</evidence>
<evidence type="ECO:0007829" key="39">
    <source>
        <dbReference type="PDB" id="8A5L"/>
    </source>
</evidence>
<evidence type="ECO:0007829" key="40">
    <source>
        <dbReference type="PDB" id="8A5M"/>
    </source>
</evidence>
<protein>
    <recommendedName>
        <fullName evidence="22">E3 ubiquitin-protein ligase TRIM7</fullName>
        <ecNumber evidence="9">2.3.2.27</ecNumber>
    </recommendedName>
    <alternativeName>
        <fullName>Glycogenin-interacting protein</fullName>
    </alternativeName>
    <alternativeName>
        <fullName>RING finger protein 90</fullName>
    </alternativeName>
    <alternativeName>
        <fullName>Tripartite motif-containing protein 7</fullName>
    </alternativeName>
</protein>
<dbReference type="EC" id="2.3.2.27" evidence="9"/>
<dbReference type="EMBL" id="AF220032">
    <property type="protein sequence ID" value="AAG53486.1"/>
    <property type="molecule type" value="mRNA"/>
</dbReference>
<dbReference type="EMBL" id="AF396651">
    <property type="protein sequence ID" value="AAK85377.1"/>
    <property type="molecule type" value="mRNA"/>
</dbReference>
<dbReference type="EMBL" id="AF396652">
    <property type="protein sequence ID" value="AAK85378.1"/>
    <property type="molecule type" value="mRNA"/>
</dbReference>
<dbReference type="EMBL" id="AF396653">
    <property type="protein sequence ID" value="AAK85379.1"/>
    <property type="molecule type" value="mRNA"/>
</dbReference>
<dbReference type="EMBL" id="AF396654">
    <property type="protein sequence ID" value="AAK85380.1"/>
    <property type="molecule type" value="mRNA"/>
</dbReference>
<dbReference type="EMBL" id="AF396655">
    <property type="protein sequence ID" value="AAK85381.1"/>
    <property type="molecule type" value="mRNA"/>
</dbReference>
<dbReference type="EMBL" id="CH471165">
    <property type="protein sequence ID" value="EAW53718.1"/>
    <property type="molecule type" value="Genomic_DNA"/>
</dbReference>
<dbReference type="EMBL" id="CH471165">
    <property type="protein sequence ID" value="EAW53716.1"/>
    <property type="molecule type" value="Genomic_DNA"/>
</dbReference>
<dbReference type="EMBL" id="CH471165">
    <property type="protein sequence ID" value="EAW53717.1"/>
    <property type="molecule type" value="Genomic_DNA"/>
</dbReference>
<dbReference type="EMBL" id="CH471165">
    <property type="protein sequence ID" value="EAW53719.1"/>
    <property type="molecule type" value="Genomic_DNA"/>
</dbReference>
<dbReference type="EMBL" id="BC011567">
    <property type="protein sequence ID" value="AAH11567.1"/>
    <property type="molecule type" value="mRNA"/>
</dbReference>
<dbReference type="EMBL" id="BC080553">
    <property type="protein sequence ID" value="AAH80553.1"/>
    <property type="molecule type" value="mRNA"/>
</dbReference>
<dbReference type="EMBL" id="BC132863">
    <property type="protein sequence ID" value="AAI32864.1"/>
    <property type="molecule type" value="mRNA"/>
</dbReference>
<dbReference type="EMBL" id="BC132867">
    <property type="protein sequence ID" value="AAI32868.1"/>
    <property type="molecule type" value="mRNA"/>
</dbReference>
<dbReference type="CCDS" id="CCDS43414.1">
    <molecule id="Q9C029-4"/>
</dbReference>
<dbReference type="CCDS" id="CCDS4462.1">
    <molecule id="Q9C029-2"/>
</dbReference>
<dbReference type="CCDS" id="CCDS4463.1">
    <molecule id="Q9C029-3"/>
</dbReference>
<dbReference type="CCDS" id="CCDS4464.1">
    <molecule id="Q9C029-1"/>
</dbReference>
<dbReference type="RefSeq" id="NP_203128.1">
    <molecule id="Q9C029-1"/>
    <property type="nucleotide sequence ID" value="NM_033342.4"/>
</dbReference>
<dbReference type="RefSeq" id="NP_976038.1">
    <molecule id="Q9C029-2"/>
    <property type="nucleotide sequence ID" value="NM_203293.3"/>
</dbReference>
<dbReference type="RefSeq" id="NP_976039.1">
    <molecule id="Q9C029-3"/>
    <property type="nucleotide sequence ID" value="NM_203294.2"/>
</dbReference>
<dbReference type="RefSeq" id="NP_976040.1">
    <molecule id="Q9C029-3"/>
    <property type="nucleotide sequence ID" value="NM_203295.2"/>
</dbReference>
<dbReference type="RefSeq" id="NP_976041.1">
    <molecule id="Q9C029-3"/>
    <property type="nucleotide sequence ID" value="NM_203296.2"/>
</dbReference>
<dbReference type="RefSeq" id="NP_976042.1">
    <molecule id="Q9C029-4"/>
    <property type="nucleotide sequence ID" value="NM_203297.2"/>
</dbReference>
<dbReference type="RefSeq" id="XP_016865392.1">
    <property type="nucleotide sequence ID" value="XM_017009903.1"/>
</dbReference>
<dbReference type="RefSeq" id="XP_016865393.1">
    <molecule id="Q9C029-1"/>
    <property type="nucleotide sequence ID" value="XM_017009904.3"/>
</dbReference>
<dbReference type="PDB" id="6UMA">
    <property type="method" value="X-ray"/>
    <property type="resolution" value="1.60 A"/>
    <property type="chains" value="A/B=338-511"/>
</dbReference>
<dbReference type="PDB" id="6UMB">
    <property type="method" value="X-ray"/>
    <property type="resolution" value="1.80 A"/>
    <property type="chains" value="A/B=338-511"/>
</dbReference>
<dbReference type="PDB" id="7OVX">
    <property type="method" value="X-ray"/>
    <property type="resolution" value="1.70 A"/>
    <property type="chains" value="A=342-511"/>
</dbReference>
<dbReference type="PDB" id="7OW2">
    <property type="method" value="X-ray"/>
    <property type="resolution" value="2.17 A"/>
    <property type="chains" value="A/B/C/D=342-511"/>
</dbReference>
<dbReference type="PDB" id="7W0Q">
    <property type="method" value="X-ray"/>
    <property type="resolution" value="1.10 A"/>
    <property type="chains" value="A=338-511"/>
</dbReference>
<dbReference type="PDB" id="7W0S">
    <property type="method" value="X-ray"/>
    <property type="resolution" value="1.40 A"/>
    <property type="chains" value="B/C/E=338-511"/>
</dbReference>
<dbReference type="PDB" id="7W0T">
    <property type="method" value="X-ray"/>
    <property type="resolution" value="1.57 A"/>
    <property type="chains" value="B/C/F=338-511"/>
</dbReference>
<dbReference type="PDB" id="7X6Y">
    <property type="method" value="X-ray"/>
    <property type="resolution" value="1.39 A"/>
    <property type="chains" value="A=338-511"/>
</dbReference>
<dbReference type="PDB" id="7X6Z">
    <property type="method" value="X-ray"/>
    <property type="resolution" value="1.43 A"/>
    <property type="chains" value="A=338-511"/>
</dbReference>
<dbReference type="PDB" id="7X70">
    <property type="method" value="X-ray"/>
    <property type="resolution" value="1.25 A"/>
    <property type="chains" value="A=338-511"/>
</dbReference>
<dbReference type="PDB" id="7Y3A">
    <property type="method" value="X-ray"/>
    <property type="resolution" value="1.70 A"/>
    <property type="chains" value="A/B/C=338-511"/>
</dbReference>
<dbReference type="PDB" id="7Y3B">
    <property type="method" value="X-ray"/>
    <property type="resolution" value="1.76 A"/>
    <property type="chains" value="A=338-511"/>
</dbReference>
<dbReference type="PDB" id="7Y3C">
    <property type="method" value="X-ray"/>
    <property type="resolution" value="1.71 A"/>
    <property type="chains" value="A=338-511"/>
</dbReference>
<dbReference type="PDB" id="8A5L">
    <property type="method" value="X-ray"/>
    <property type="resolution" value="1.62 A"/>
    <property type="chains" value="A=342-511"/>
</dbReference>
<dbReference type="PDB" id="8A5M">
    <property type="method" value="X-ray"/>
    <property type="resolution" value="2.92 A"/>
    <property type="chains" value="A/B=342-511"/>
</dbReference>
<dbReference type="PDB" id="8A8X">
    <property type="method" value="X-ray"/>
    <property type="resolution" value="2.37 A"/>
    <property type="chains" value="A/C=342-511"/>
</dbReference>
<dbReference type="PDB" id="8R5B">
    <property type="method" value="X-ray"/>
    <property type="resolution" value="1.60 A"/>
    <property type="chains" value="A/B=338-511"/>
</dbReference>
<dbReference type="PDB" id="8R5C">
    <property type="method" value="X-ray"/>
    <property type="resolution" value="1.60 A"/>
    <property type="chains" value="A=338-511"/>
</dbReference>
<dbReference type="PDB" id="8R5D">
    <property type="method" value="X-ray"/>
    <property type="resolution" value="1.80 A"/>
    <property type="chains" value="A/B=338-511"/>
</dbReference>
<dbReference type="PDB" id="9HIN">
    <property type="method" value="X-ray"/>
    <property type="resolution" value="1.55 A"/>
    <property type="chains" value="A=338-511"/>
</dbReference>
<dbReference type="PDBsum" id="6UMA"/>
<dbReference type="PDBsum" id="6UMB"/>
<dbReference type="PDBsum" id="7OVX"/>
<dbReference type="PDBsum" id="7OW2"/>
<dbReference type="PDBsum" id="7W0Q"/>
<dbReference type="PDBsum" id="7W0S"/>
<dbReference type="PDBsum" id="7W0T"/>
<dbReference type="PDBsum" id="7X6Y"/>
<dbReference type="PDBsum" id="7X6Z"/>
<dbReference type="PDBsum" id="7X70"/>
<dbReference type="PDBsum" id="7Y3A"/>
<dbReference type="PDBsum" id="7Y3B"/>
<dbReference type="PDBsum" id="7Y3C"/>
<dbReference type="PDBsum" id="8A5L"/>
<dbReference type="PDBsum" id="8A5M"/>
<dbReference type="PDBsum" id="8A8X"/>
<dbReference type="PDBsum" id="8R5B"/>
<dbReference type="PDBsum" id="8R5C"/>
<dbReference type="PDBsum" id="8R5D"/>
<dbReference type="PDBsum" id="9HIN"/>
<dbReference type="SMR" id="Q9C029"/>
<dbReference type="BioGRID" id="123579">
    <property type="interactions" value="109"/>
</dbReference>
<dbReference type="FunCoup" id="Q9C029">
    <property type="interactions" value="1054"/>
</dbReference>
<dbReference type="IntAct" id="Q9C029">
    <property type="interactions" value="53"/>
</dbReference>
<dbReference type="MINT" id="Q9C029"/>
<dbReference type="STRING" id="9606.ENSP00000274773"/>
<dbReference type="iPTMnet" id="Q9C029"/>
<dbReference type="PhosphoSitePlus" id="Q9C029"/>
<dbReference type="BioMuta" id="TRIM7"/>
<dbReference type="DMDM" id="38605728"/>
<dbReference type="jPOST" id="Q9C029"/>
<dbReference type="MassIVE" id="Q9C029"/>
<dbReference type="PaxDb" id="9606-ENSP00000274773"/>
<dbReference type="PeptideAtlas" id="Q9C029"/>
<dbReference type="ProteomicsDB" id="79946">
    <molecule id="Q9C029-2"/>
</dbReference>
<dbReference type="ProteomicsDB" id="79947">
    <molecule id="Q9C029-1"/>
</dbReference>
<dbReference type="ProteomicsDB" id="79948">
    <molecule id="Q9C029-3"/>
</dbReference>
<dbReference type="ProteomicsDB" id="79949">
    <molecule id="Q9C029-4"/>
</dbReference>
<dbReference type="Pumba" id="Q9C029"/>
<dbReference type="TopDownProteomics" id="Q9C029-2">
    <molecule id="Q9C029-2"/>
</dbReference>
<dbReference type="Antibodypedia" id="29710">
    <property type="antibodies" value="149 antibodies from 26 providers"/>
</dbReference>
<dbReference type="DNASU" id="81786"/>
<dbReference type="Ensembl" id="ENST00000274773.12">
    <molecule id="Q9C029-2"/>
    <property type="protein sequence ID" value="ENSP00000274773.7"/>
    <property type="gene ID" value="ENSG00000146054.18"/>
</dbReference>
<dbReference type="Ensembl" id="ENST00000334421.5">
    <molecule id="Q9C029-1"/>
    <property type="protein sequence ID" value="ENSP00000334666.5"/>
    <property type="gene ID" value="ENSG00000146054.18"/>
</dbReference>
<dbReference type="Ensembl" id="ENST00000393315.5">
    <molecule id="Q9C029-3"/>
    <property type="protein sequence ID" value="ENSP00000376991.1"/>
    <property type="gene ID" value="ENSG00000146054.18"/>
</dbReference>
<dbReference type="Ensembl" id="ENST00000393319.7">
    <molecule id="Q9C029-4"/>
    <property type="protein sequence ID" value="ENSP00000376994.3"/>
    <property type="gene ID" value="ENSG00000146054.18"/>
</dbReference>
<dbReference type="Ensembl" id="ENST00000422067.2">
    <molecule id="Q9C029-3"/>
    <property type="protein sequence ID" value="ENSP00000391458.2"/>
    <property type="gene ID" value="ENSG00000146054.18"/>
</dbReference>
<dbReference type="GeneID" id="81786"/>
<dbReference type="KEGG" id="hsa:81786"/>
<dbReference type="MANE-Select" id="ENST00000274773.12">
    <property type="protein sequence ID" value="ENSP00000274773.7"/>
    <property type="RefSeq nucleotide sequence ID" value="NM_203293.3"/>
    <property type="RefSeq protein sequence ID" value="NP_976038.1"/>
</dbReference>
<dbReference type="UCSC" id="uc003mmv.2">
    <molecule id="Q9C029-2"/>
    <property type="organism name" value="human"/>
</dbReference>
<dbReference type="AGR" id="HGNC:16278"/>
<dbReference type="CTD" id="81786"/>
<dbReference type="DisGeNET" id="81786"/>
<dbReference type="GeneCards" id="TRIM7"/>
<dbReference type="HGNC" id="HGNC:16278">
    <property type="gene designation" value="TRIM7"/>
</dbReference>
<dbReference type="HPA" id="ENSG00000146054">
    <property type="expression patterns" value="Tissue enhanced (brain, skeletal muscle, tongue)"/>
</dbReference>
<dbReference type="MIM" id="609315">
    <property type="type" value="gene"/>
</dbReference>
<dbReference type="neXtProt" id="NX_Q9C029"/>
<dbReference type="OpenTargets" id="ENSG00000146054"/>
<dbReference type="PharmGKB" id="PA38398"/>
<dbReference type="VEuPathDB" id="HostDB:ENSG00000146054"/>
<dbReference type="eggNOG" id="KOG2177">
    <property type="taxonomic scope" value="Eukaryota"/>
</dbReference>
<dbReference type="GeneTree" id="ENSGT01030000234669"/>
<dbReference type="HOGENOM" id="CLU_013137_0_3_1"/>
<dbReference type="InParanoid" id="Q9C029"/>
<dbReference type="OMA" id="DMKMHIC"/>
<dbReference type="OrthoDB" id="654191at2759"/>
<dbReference type="PAN-GO" id="Q9C029">
    <property type="GO annotations" value="3 GO annotations based on evolutionary models"/>
</dbReference>
<dbReference type="PhylomeDB" id="Q9C029"/>
<dbReference type="TreeFam" id="TF342569"/>
<dbReference type="PathwayCommons" id="Q9C029"/>
<dbReference type="SignaLink" id="Q9C029"/>
<dbReference type="SIGNOR" id="Q9C029"/>
<dbReference type="UniPathway" id="UPA00143"/>
<dbReference type="BioGRID-ORCS" id="81786">
    <property type="hits" value="17 hits in 1195 CRISPR screens"/>
</dbReference>
<dbReference type="ChiTaRS" id="TRIM7">
    <property type="organism name" value="human"/>
</dbReference>
<dbReference type="GenomeRNAi" id="81786"/>
<dbReference type="Pharos" id="Q9C029">
    <property type="development level" value="Tbio"/>
</dbReference>
<dbReference type="PRO" id="PR:Q9C029"/>
<dbReference type="Proteomes" id="UP000005640">
    <property type="component" value="Chromosome 5"/>
</dbReference>
<dbReference type="RNAct" id="Q9C029">
    <property type="molecule type" value="protein"/>
</dbReference>
<dbReference type="Bgee" id="ENSG00000146054">
    <property type="expression patterns" value="Expressed in vastus lateralis and 129 other cell types or tissues"/>
</dbReference>
<dbReference type="GO" id="GO:0005737">
    <property type="term" value="C:cytoplasm"/>
    <property type="evidence" value="ECO:0000314"/>
    <property type="project" value="UniProtKB"/>
</dbReference>
<dbReference type="GO" id="GO:0005794">
    <property type="term" value="C:Golgi apparatus"/>
    <property type="evidence" value="ECO:0007669"/>
    <property type="project" value="UniProtKB-SubCell"/>
</dbReference>
<dbReference type="GO" id="GO:0005634">
    <property type="term" value="C:nucleus"/>
    <property type="evidence" value="ECO:0000314"/>
    <property type="project" value="UniProtKB"/>
</dbReference>
<dbReference type="GO" id="GO:0061630">
    <property type="term" value="F:ubiquitin protein ligase activity"/>
    <property type="evidence" value="ECO:0000314"/>
    <property type="project" value="UniProt"/>
</dbReference>
<dbReference type="GO" id="GO:0008270">
    <property type="term" value="F:zinc ion binding"/>
    <property type="evidence" value="ECO:0007669"/>
    <property type="project" value="UniProtKB-KW"/>
</dbReference>
<dbReference type="GO" id="GO:0140374">
    <property type="term" value="P:antiviral innate immune response"/>
    <property type="evidence" value="ECO:0000314"/>
    <property type="project" value="UniProt"/>
</dbReference>
<dbReference type="GO" id="GO:0045087">
    <property type="term" value="P:innate immune response"/>
    <property type="evidence" value="ECO:0000318"/>
    <property type="project" value="GO_Central"/>
</dbReference>
<dbReference type="GO" id="GO:0016567">
    <property type="term" value="P:protein ubiquitination"/>
    <property type="evidence" value="ECO:0007669"/>
    <property type="project" value="UniProtKB-UniPathway"/>
</dbReference>
<dbReference type="CDD" id="cd19762">
    <property type="entry name" value="Bbox2_TRIM7-like"/>
    <property type="match status" value="1"/>
</dbReference>
<dbReference type="CDD" id="cd16594">
    <property type="entry name" value="RING-HC_TRIM7-like_C-IV"/>
    <property type="match status" value="1"/>
</dbReference>
<dbReference type="CDD" id="cd13740">
    <property type="entry name" value="SPRY_PRY_TRIM7"/>
    <property type="match status" value="1"/>
</dbReference>
<dbReference type="FunFam" id="2.60.120.920:FF:000025">
    <property type="entry name" value="E3 ubiquitin-protein ligase TRIM41 isoform X1"/>
    <property type="match status" value="1"/>
</dbReference>
<dbReference type="FunFam" id="3.30.160.60:FF:000858">
    <property type="entry name" value="Zinc finger protein RFP"/>
    <property type="match status" value="1"/>
</dbReference>
<dbReference type="Gene3D" id="2.60.120.920">
    <property type="match status" value="1"/>
</dbReference>
<dbReference type="Gene3D" id="3.30.160.60">
    <property type="entry name" value="Classic Zinc Finger"/>
    <property type="match status" value="1"/>
</dbReference>
<dbReference type="Gene3D" id="3.30.40.10">
    <property type="entry name" value="Zinc/RING finger domain, C3HC4 (zinc finger)"/>
    <property type="match status" value="1"/>
</dbReference>
<dbReference type="InterPro" id="IPR001870">
    <property type="entry name" value="B30.2/SPRY"/>
</dbReference>
<dbReference type="InterPro" id="IPR043136">
    <property type="entry name" value="B30.2/SPRY_sf"/>
</dbReference>
<dbReference type="InterPro" id="IPR003879">
    <property type="entry name" value="Butyrophylin_SPRY"/>
</dbReference>
<dbReference type="InterPro" id="IPR013320">
    <property type="entry name" value="ConA-like_dom_sf"/>
</dbReference>
<dbReference type="InterPro" id="IPR006574">
    <property type="entry name" value="PRY"/>
</dbReference>
<dbReference type="InterPro" id="IPR003877">
    <property type="entry name" value="SPRY_dom"/>
</dbReference>
<dbReference type="InterPro" id="IPR050143">
    <property type="entry name" value="TRIM/RBCC"/>
</dbReference>
<dbReference type="InterPro" id="IPR000315">
    <property type="entry name" value="Znf_B-box"/>
</dbReference>
<dbReference type="InterPro" id="IPR020457">
    <property type="entry name" value="Znf_B-box_chordata"/>
</dbReference>
<dbReference type="InterPro" id="IPR001841">
    <property type="entry name" value="Znf_RING"/>
</dbReference>
<dbReference type="InterPro" id="IPR013083">
    <property type="entry name" value="Znf_RING/FYVE/PHD"/>
</dbReference>
<dbReference type="InterPro" id="IPR017907">
    <property type="entry name" value="Znf_RING_CS"/>
</dbReference>
<dbReference type="PANTHER" id="PTHR24103">
    <property type="entry name" value="E3 UBIQUITIN-PROTEIN LIGASE TRIM"/>
    <property type="match status" value="1"/>
</dbReference>
<dbReference type="Pfam" id="PF13765">
    <property type="entry name" value="PRY"/>
    <property type="match status" value="1"/>
</dbReference>
<dbReference type="Pfam" id="PF00622">
    <property type="entry name" value="SPRY"/>
    <property type="match status" value="1"/>
</dbReference>
<dbReference type="Pfam" id="PF00643">
    <property type="entry name" value="zf-B_box"/>
    <property type="match status" value="1"/>
</dbReference>
<dbReference type="Pfam" id="PF15227">
    <property type="entry name" value="zf-C3HC4_4"/>
    <property type="match status" value="1"/>
</dbReference>
<dbReference type="PRINTS" id="PR01406">
    <property type="entry name" value="BBOXZNFINGER"/>
</dbReference>
<dbReference type="PRINTS" id="PR01407">
    <property type="entry name" value="BUTYPHLNCDUF"/>
</dbReference>
<dbReference type="SMART" id="SM00336">
    <property type="entry name" value="BBOX"/>
    <property type="match status" value="1"/>
</dbReference>
<dbReference type="SMART" id="SM00589">
    <property type="entry name" value="PRY"/>
    <property type="match status" value="1"/>
</dbReference>
<dbReference type="SMART" id="SM00184">
    <property type="entry name" value="RING"/>
    <property type="match status" value="1"/>
</dbReference>
<dbReference type="SMART" id="SM00449">
    <property type="entry name" value="SPRY"/>
    <property type="match status" value="1"/>
</dbReference>
<dbReference type="SUPFAM" id="SSF57845">
    <property type="entry name" value="B-box zinc-binding domain"/>
    <property type="match status" value="1"/>
</dbReference>
<dbReference type="SUPFAM" id="SSF49899">
    <property type="entry name" value="Concanavalin A-like lectins/glucanases"/>
    <property type="match status" value="1"/>
</dbReference>
<dbReference type="SUPFAM" id="SSF57850">
    <property type="entry name" value="RING/U-box"/>
    <property type="match status" value="1"/>
</dbReference>
<dbReference type="PROSITE" id="PS50188">
    <property type="entry name" value="B302_SPRY"/>
    <property type="match status" value="1"/>
</dbReference>
<dbReference type="PROSITE" id="PS50119">
    <property type="entry name" value="ZF_BBOX"/>
    <property type="match status" value="1"/>
</dbReference>
<dbReference type="PROSITE" id="PS00518">
    <property type="entry name" value="ZF_RING_1"/>
    <property type="match status" value="1"/>
</dbReference>
<dbReference type="PROSITE" id="PS50089">
    <property type="entry name" value="ZF_RING_2"/>
    <property type="match status" value="1"/>
</dbReference>
<organism>
    <name type="scientific">Homo sapiens</name>
    <name type="common">Human</name>
    <dbReference type="NCBI Taxonomy" id="9606"/>
    <lineage>
        <taxon>Eukaryota</taxon>
        <taxon>Metazoa</taxon>
        <taxon>Chordata</taxon>
        <taxon>Craniata</taxon>
        <taxon>Vertebrata</taxon>
        <taxon>Euteleostomi</taxon>
        <taxon>Mammalia</taxon>
        <taxon>Eutheria</taxon>
        <taxon>Euarchontoglires</taxon>
        <taxon>Primates</taxon>
        <taxon>Haplorrhini</taxon>
        <taxon>Catarrhini</taxon>
        <taxon>Hominidae</taxon>
        <taxon>Homo</taxon>
    </lineage>
</organism>
<name>TRIM7_HUMAN</name>
<reference key="1">
    <citation type="journal article" date="2001" name="EMBO J.">
        <title>The tripartite motif family identifies cell compartments.</title>
        <authorList>
            <person name="Reymond A."/>
            <person name="Meroni G."/>
            <person name="Fantozzi A."/>
            <person name="Merla G."/>
            <person name="Cairo S."/>
            <person name="Luzi L."/>
            <person name="Riganelli D."/>
            <person name="Zanaria E."/>
            <person name="Messali S."/>
            <person name="Cainarca S."/>
            <person name="Guffanti A."/>
            <person name="Minucci S."/>
            <person name="Pelicci P.G."/>
            <person name="Ballabio A."/>
        </authorList>
    </citation>
    <scope>NUCLEOTIDE SEQUENCE [MRNA] (ISOFORM 4)</scope>
</reference>
<reference key="2">
    <citation type="journal article" date="2002" name="J. Biol. Chem.">
        <title>GNIP, a novel protein that binds and activates glycogenin, the self-glucosylating initiator of glycogen biosynthesis.</title>
        <authorList>
            <person name="Skurat A.V."/>
            <person name="Dietrich A.D."/>
            <person name="Zhai L."/>
            <person name="Roach P.J."/>
        </authorList>
    </citation>
    <scope>NUCLEOTIDE SEQUENCE [MRNA] (ISOFORMS 1; 2 AND 3)</scope>
    <scope>INTERACTION WITH GYG</scope>
    <source>
        <tissue>Skeletal muscle</tissue>
    </source>
</reference>
<reference key="3">
    <citation type="submission" date="2005-09" db="EMBL/GenBank/DDBJ databases">
        <authorList>
            <person name="Mural R.J."/>
            <person name="Istrail S."/>
            <person name="Sutton G.G."/>
            <person name="Florea L."/>
            <person name="Halpern A.L."/>
            <person name="Mobarry C.M."/>
            <person name="Lippert R."/>
            <person name="Walenz B."/>
            <person name="Shatkay H."/>
            <person name="Dew I."/>
            <person name="Miller J.R."/>
            <person name="Flanigan M.J."/>
            <person name="Edwards N.J."/>
            <person name="Bolanos R."/>
            <person name="Fasulo D."/>
            <person name="Halldorsson B.V."/>
            <person name="Hannenhalli S."/>
            <person name="Turner R."/>
            <person name="Yooseph S."/>
            <person name="Lu F."/>
            <person name="Nusskern D.R."/>
            <person name="Shue B.C."/>
            <person name="Zheng X.H."/>
            <person name="Zhong F."/>
            <person name="Delcher A.L."/>
            <person name="Huson D.H."/>
            <person name="Kravitz S.A."/>
            <person name="Mouchard L."/>
            <person name="Reinert K."/>
            <person name="Remington K.A."/>
            <person name="Clark A.G."/>
            <person name="Waterman M.S."/>
            <person name="Eichler E.E."/>
            <person name="Adams M.D."/>
            <person name="Hunkapiller M.W."/>
            <person name="Myers E.W."/>
            <person name="Venter J.C."/>
        </authorList>
    </citation>
    <scope>NUCLEOTIDE SEQUENCE [LARGE SCALE GENOMIC DNA]</scope>
</reference>
<reference key="4">
    <citation type="journal article" date="2004" name="Genome Res.">
        <title>The status, quality, and expansion of the NIH full-length cDNA project: the Mammalian Gene Collection (MGC).</title>
        <authorList>
            <consortium name="The MGC Project Team"/>
        </authorList>
    </citation>
    <scope>NUCLEOTIDE SEQUENCE [LARGE SCALE MRNA] (ISOFORMS 1 AND 4)</scope>
    <scope>VARIANT GLU-95</scope>
    <source>
        <tissue>Lung</tissue>
        <tissue>Salivary gland</tissue>
    </source>
</reference>
<reference key="5">
    <citation type="journal article" date="2004" name="Arch. Biochem. Biophys.">
        <title>Structure-function analysis of GNIP, the glycogenin-interacting protein.</title>
        <authorList>
            <person name="Zhai L."/>
            <person name="Dietrich A."/>
            <person name="Skurat A.V."/>
            <person name="Roach P.J."/>
        </authorList>
    </citation>
    <scope>SUBUNIT</scope>
    <scope>INTERACTION WITH GYG</scope>
    <scope>TISSUE SPECIFICITY</scope>
    <scope>DOMAIN</scope>
</reference>
<reference key="6">
    <citation type="journal article" date="2015" name="Nat. Commun.">
        <title>The E3 ubiquitin ligase Trim7 mediates c-Jun/AP-1 activation by Ras signalling.</title>
        <authorList>
            <person name="Chakraborty A."/>
            <person name="Diefenbacher M.E."/>
            <person name="Mylona A."/>
            <person name="Kassel O."/>
            <person name="Behrens A."/>
        </authorList>
    </citation>
    <scope>FUNCTION</scope>
    <scope>CATALYTIC ACTIVITY</scope>
    <scope>PATHWAY</scope>
    <scope>SUBUNIT</scope>
    <scope>INTERACTION WITH RNF187</scope>
    <scope>PHOSPHORYLATION AT SER-107 BY RPS6KA5</scope>
    <scope>IDENTIFICATION BY MASS SPECTROMETRY</scope>
    <scope>MUTAGENESIS OF CYS-29; CYS-32; TRP-57 AND SER-107</scope>
</reference>
<reference key="7">
    <citation type="journal article" date="2020" name="PLoS Pathog.">
        <title>RNF90 negatively regulates cellular antiviral responses by targeting MITA for degradation.</title>
        <authorList>
            <person name="Yang B."/>
            <person name="Liu Y."/>
            <person name="Cui Y."/>
            <person name="Song D."/>
            <person name="Zhang G."/>
            <person name="Ma S."/>
            <person name="Liu Y."/>
            <person name="Chen M."/>
            <person name="Chen F."/>
            <person name="Wang H."/>
            <person name="Wang J."/>
        </authorList>
    </citation>
    <scope>FUNCTION</scope>
</reference>
<reference key="8">
    <citation type="journal article" date="2020" name="Nature">
        <title>Envelope protein ubiquitination drives entry and pathogenesis of Zika virus.</title>
        <authorList>
            <person name="Giraldo M.I."/>
            <person name="Xia H."/>
            <person name="Aguilera-Aguirre L."/>
            <person name="Hage A."/>
            <person name="van Tol S."/>
            <person name="Shan C."/>
            <person name="Xie X."/>
            <person name="Sturdevant G.L."/>
            <person name="Robertson S.J."/>
            <person name="McNally K.L."/>
            <person name="Meade-White K."/>
            <person name="Azar S.R."/>
            <person name="Rossi S.L."/>
            <person name="Maury W."/>
            <person name="Woodson M."/>
            <person name="Ramage H."/>
            <person name="Johnson J.R."/>
            <person name="Krogan N.J."/>
            <person name="Morais M.C."/>
            <person name="Best S.M."/>
            <person name="Shi P.Y."/>
            <person name="Rajsbaum R."/>
        </authorList>
    </citation>
    <scope>FUNCTION (MICROBIAL INFECTION)</scope>
    <scope>SUBCELLULAR LOCATION</scope>
</reference>
<reference key="9">
    <citation type="journal article" date="2020" name="EBioMedicine">
        <title>N6-Methyladenosine modification of the TRIM7 positively regulates tumorigenesis and chemoresistance in osteosarcoma through ubiquitination of BRMS1.</title>
        <authorList>
            <person name="Zhou C."/>
            <person name="Zhang Z."/>
            <person name="Zhu X."/>
            <person name="Qian G."/>
            <person name="Zhou Y."/>
            <person name="Sun Y."/>
            <person name="Yu W."/>
            <person name="Wang J."/>
            <person name="Lu H."/>
            <person name="Lin F."/>
            <person name="Shen Z."/>
            <person name="Zheng S."/>
        </authorList>
    </citation>
    <scope>FUNCTION</scope>
    <scope>SUBCELLULAR LOCATION</scope>
</reference>
<reference key="10">
    <citation type="journal article" date="2021" name="Cell">
        <title>TRIM7 inhibits enterovirus replication and promotes emergence of a viral variant with increased pathogenicity.</title>
        <authorList>
            <person name="Fan W."/>
            <person name="Mar K.B."/>
            <person name="Sari L."/>
            <person name="Gaszek I.K."/>
            <person name="Cheng Q."/>
            <person name="Evers B.M."/>
            <person name="Shelton J.M."/>
            <person name="Wight-Carter M."/>
            <person name="Siegwart D.J."/>
            <person name="Lin M.M."/>
            <person name="Schoggins J.W."/>
        </authorList>
    </citation>
    <scope>FUNCTION</scope>
    <scope>MUTAGENESIS OF CYS-29 AND CYS-32</scope>
    <scope>SUBCELLULAR LOCATION</scope>
</reference>
<reference key="11">
    <citation type="journal article" date="2022" name="Redox Biol.">
        <title>TRIM7 modulates NCOA4-mediated ferritinophagy and ferroptosis in glioblastoma cells.</title>
        <authorList>
            <person name="Li K."/>
            <person name="Chen B."/>
            <person name="Xu A."/>
            <person name="Shen J."/>
            <person name="Li K."/>
            <person name="Hao K."/>
            <person name="Hao R."/>
            <person name="Yang W."/>
            <person name="Jiang W."/>
            <person name="Zheng Y."/>
            <person name="Ge F."/>
            <person name="Wang Z."/>
        </authorList>
    </citation>
    <scope>FUNCTION</scope>
</reference>
<reference evidence="23 24" key="12">
    <citation type="journal article" date="2021" name="J. Biol. Chem.">
        <title>Crystal structure and mutational analysis of the human TRIM7 B30.2 domain provide insights into the molecular basis of its binding to glycogenin-1.</title>
        <authorList>
            <person name="Munoz Sosa C.J."/>
            <person name="Issoglio F.M."/>
            <person name="Carrizo M.E."/>
        </authorList>
    </citation>
    <scope>X-RAY CRYSTALLOGRAPHY (1.60 ANGSTROMS) OF 338-511</scope>
    <scope>INTERACTION WITH GYG1</scope>
    <scope>MUTAGENESIS OF LEU-423; SER-499 AND CYS-501</scope>
</reference>
<reference evidence="25 26 27 28 29 30" key="13">
    <citation type="journal article" date="2022" name="Nat. Chem. Biol.">
        <title>A C-terminal glutamine recognition mechanism revealed by E3 ligase TRIM7 structures.</title>
        <authorList>
            <person name="Liang X."/>
            <person name="Xiao J."/>
            <person name="Li X."/>
            <person name="Liu Y."/>
            <person name="Lu Y."/>
            <person name="Wen Y."/>
            <person name="Li Z."/>
            <person name="Che X."/>
            <person name="Ma Y."/>
            <person name="Zhang X."/>
            <person name="Zhang Y."/>
            <person name="Jian D."/>
            <person name="Wang P."/>
            <person name="Xuan C."/>
            <person name="Yu G."/>
            <person name="Li L."/>
            <person name="Zhang H."/>
        </authorList>
    </citation>
    <scope>X-RAY CRYSTALLOGRAPHY (1.10 ANGSTROMS) OF 338-511</scope>
    <scope>FUNCTION</scope>
</reference>
<reference evidence="31 32 33" key="14">
    <citation type="journal article" date="2022" name="Proc. Natl. Acad. Sci. U.S.A.">
        <title>C-terminal glutamine acts as a C-degron targeted by E3 ubiquitin ligase TRIM7.</title>
        <authorList>
            <person name="Ru Y."/>
            <person name="Yan X."/>
            <person name="Zhang B."/>
            <person name="Song L."/>
            <person name="Feng Q."/>
            <person name="Ye C."/>
            <person name="Zhou Z."/>
            <person name="Yang Z."/>
            <person name="Li Y."/>
            <person name="Zhang Z."/>
            <person name="Li Q."/>
            <person name="Mi W."/>
            <person name="Dong C."/>
        </authorList>
    </citation>
    <scope>X-RAY CRYSTALLOGRAPHY (1.70 ANGSTROMS) OF 338-511</scope>
    <scope>FUNCTION</scope>
</reference>
<reference evidence="34 35 36" key="15">
    <citation type="journal article" date="2022" name="Viruses">
        <title>TRIM7 Restricts Coxsackievirus and Norovirus Infection by Detecting the C-Terminal Glutamine Generated by 3C Protease Processing.</title>
        <authorList>
            <person name="Luptak J."/>
            <person name="Mallery D.L."/>
            <person name="Jahun A.S."/>
            <person name="Albecka A."/>
            <person name="Clift D."/>
            <person name="Ather O."/>
            <person name="Slodkowicz G."/>
            <person name="Goodfellow I."/>
            <person name="James L.C."/>
        </authorList>
    </citation>
    <scope>X-RAY CRYSTALLOGRAPHY (1.62 ANGSTROMS) OF 342-511</scope>
    <scope>FUNCTION</scope>
    <scope>MUTAGENESIS OF ASN-383; ARG-385; PHE-426 AND GLN-436</scope>
    <scope>SUBUNIT</scope>
    <scope>UBIQUITINATION</scope>
</reference>
<comment type="function">
    <text evidence="1 9 10 12 14 15 16 17 18">E3 ubiquitin-protein ligase that have both tumor-promoting and tumor-suppressing activities and functions in several biological processes including innate immunity, regulation of ferroptosis as well as cell proliferation and migration (PubMed:25851810, PubMed:32853985, PubMed:34062120). Acts as an antiviral effector against multiple viruses by targeting specific viral proteins for ubiquitination and degradation including norovirus NTPase protein or SARS-CoV-2 NSP5 and NSP8 proteins (PubMed:34062120, PubMed:35982226). Mechanistically, recognizes the C-terminal glutamine-containing motif usually generated by viral proteases that process the polyproteins and trigger their ubiquitination and subsequent degradation (PubMed:35867826, PubMed:35893676, PubMed:35982226). Mediates 'Lys-63'-linked polyubiquitination and stabilization of the JUN coactivator RNF187 in response to growth factor signaling via the MEK/ERK pathway, thereby regulating JUN transactivation and cellular proliferation (PubMed:25851810). Promotes the TLR4-mediated signaling activation through its E3 ligase domain leading to production of pro-inflammatory cytokines and type I interferon (By similarity). Also plays a negative role in the regulation of exogenous cytosolic DNA virus-triggered immune response. Mechanistically, enhances the 'Lys-48'-linked ubiquitination of STING1 leading to its proteasome-dependent degradation (PubMed:32126128). Mediates the ubiquitination of the SIN3-HDAC chromatin remodeling complex component BRMS1 (PubMed:32853985). Modulates NCOA4-mediated ferritinophagy and ferroptosis in glioblastoma cells by ubiquitinating NCOA4, leading to its degradation (PubMed:36067704).</text>
</comment>
<comment type="function">
    <text evidence="11">(Microbial infection) Promotes Zika virus replication by mediating envelope protein E ubiquitination.</text>
</comment>
<comment type="catalytic activity">
    <reaction evidence="9">
        <text>S-ubiquitinyl-[E2 ubiquitin-conjugating enzyme]-L-cysteine + [acceptor protein]-L-lysine = [E2 ubiquitin-conjugating enzyme]-L-cysteine + N(6)-ubiquitinyl-[acceptor protein]-L-lysine.</text>
        <dbReference type="EC" id="2.3.2.27"/>
    </reaction>
</comment>
<comment type="pathway">
    <text evidence="9">Protein modification; protein ubiquitination.</text>
</comment>
<comment type="subunit">
    <text evidence="6 7 9 16">Forms homodimers (PubMed:35893676). Interacts with GNIP2 (PubMed:14984203, PubMed:25851810). Interacts with GYG1 (PubMed:11916970, PubMed:14984203, PubMed:33989636). Interacts with RNF187 (via C-terminus) (PubMed:25851810).</text>
</comment>
<comment type="interaction">
    <interactant intactId="EBI-2813981">
        <id>Q9C029</id>
    </interactant>
    <interactant intactId="EBI-745213">
        <id>P29972</id>
        <label>AQP1</label>
    </interactant>
    <organismsDiffer>false</organismsDiffer>
    <experiments>3</experiments>
</comment>
<comment type="interaction">
    <interactant intactId="EBI-2813981">
        <id>Q9C029</id>
    </interactant>
    <interactant intactId="EBI-10212133">
        <id>P50895</id>
        <label>BCAM</label>
    </interactant>
    <organismsDiffer>false</organismsDiffer>
    <experiments>3</experiments>
</comment>
<comment type="interaction">
    <interactant intactId="EBI-2813981">
        <id>Q9C029</id>
    </interactant>
    <interactant intactId="EBI-22523896">
        <id>A0A2R8YD28</id>
        <label>CDK13</label>
    </interactant>
    <organismsDiffer>false</organismsDiffer>
    <experiments>3</experiments>
</comment>
<comment type="interaction">
    <interactant intactId="EBI-2813981">
        <id>Q9C029</id>
    </interactant>
    <interactant intactId="EBI-351218">
        <id>Q9Y281</id>
        <label>CFL2</label>
    </interactant>
    <organismsDiffer>false</organismsDiffer>
    <experiments>3</experiments>
</comment>
<comment type="interaction">
    <interactant intactId="EBI-2813981">
        <id>Q9C029</id>
    </interactant>
    <interactant intactId="EBI-6875941">
        <id>P07315</id>
        <label>CRYGC</label>
    </interactant>
    <organismsDiffer>false</organismsDiffer>
    <experiments>3</experiments>
</comment>
<comment type="interaction">
    <interactant intactId="EBI-2813981">
        <id>Q9C029</id>
    </interactant>
    <interactant intactId="EBI-514206">
        <id>Q9UBT7</id>
        <label>CTNNAL1</label>
    </interactant>
    <organismsDiffer>false</organismsDiffer>
    <experiments>3</experiments>
</comment>
<comment type="interaction">
    <interactant intactId="EBI-2813981">
        <id>Q9C029</id>
    </interactant>
    <interactant intactId="EBI-1045262">
        <id>P52657</id>
        <label>GTF2A2</label>
    </interactant>
    <organismsDiffer>false</organismsDiffer>
    <experiments>3</experiments>
</comment>
<comment type="interaction">
    <interactant intactId="EBI-2813981">
        <id>Q9C029</id>
    </interactant>
    <interactant intactId="EBI-448378">
        <id>Q9NWZ3</id>
        <label>IRAK4</label>
    </interactant>
    <organismsDiffer>false</organismsDiffer>
    <experiments>3</experiments>
</comment>
<comment type="interaction">
    <interactant intactId="EBI-2813981">
        <id>Q9C029</id>
    </interactant>
    <interactant intactId="EBI-77889">
        <id>Q9UI95</id>
        <label>MAD2L2</label>
    </interactant>
    <organismsDiffer>false</organismsDiffer>
    <experiments>3</experiments>
</comment>
<comment type="interaction">
    <interactant intactId="EBI-2813981">
        <id>Q9C029</id>
    </interactant>
    <interactant intactId="EBI-9106478">
        <id>Q5VZE5</id>
        <label>NAA35</label>
    </interactant>
    <organismsDiffer>false</organismsDiffer>
    <experiments>3</experiments>
</comment>
<comment type="interaction">
    <interactant intactId="EBI-2813981">
        <id>Q9C029</id>
    </interactant>
    <interactant intactId="EBI-2889252">
        <id>Q96AH0</id>
        <label>NABP1</label>
    </interactant>
    <organismsDiffer>false</organismsDiffer>
    <experiments>3</experiments>
</comment>
<comment type="interaction">
    <interactant intactId="EBI-2813981">
        <id>Q9C029</id>
    </interactant>
    <interactant intactId="EBI-11960139">
        <id>Q7L8S5</id>
        <label>OTUD6A</label>
    </interactant>
    <organismsDiffer>false</organismsDiffer>
    <experiments>3</experiments>
</comment>
<comment type="interaction">
    <interactant intactId="EBI-2813981">
        <id>Q9C029</id>
    </interactant>
    <interactant intactId="EBI-752037">
        <id>P61019</id>
        <label>RAB2A</label>
    </interactant>
    <organismsDiffer>false</organismsDiffer>
    <experiments>3</experiments>
</comment>
<comment type="interaction">
    <interactant intactId="EBI-2813981">
        <id>Q9C029</id>
    </interactant>
    <interactant intactId="EBI-366017">
        <id>Q13671</id>
        <label>RIN1</label>
    </interactant>
    <organismsDiffer>false</organismsDiffer>
    <experiments>3</experiments>
</comment>
<comment type="interaction">
    <interactant intactId="EBI-2813981">
        <id>Q9C029</id>
    </interactant>
    <interactant intactId="EBI-2823523">
        <id>P07998</id>
        <label>RNASE1</label>
    </interactant>
    <organismsDiffer>false</organismsDiffer>
    <experiments>3</experiments>
</comment>
<comment type="interaction">
    <interactant intactId="EBI-2813981">
        <id>Q9C029</id>
    </interactant>
    <interactant intactId="EBI-748350">
        <id>Q9UHP6</id>
        <label>RSPH14</label>
    </interactant>
    <organismsDiffer>false</organismsDiffer>
    <experiments>3</experiments>
</comment>
<comment type="interaction">
    <interactant intactId="EBI-2813981">
        <id>Q9C029</id>
    </interactant>
    <interactant intactId="EBI-724442">
        <id>P57060</id>
        <label>RWDD2B</label>
    </interactant>
    <organismsDiffer>false</organismsDiffer>
    <experiments>3</experiments>
</comment>
<comment type="interaction">
    <interactant intactId="EBI-2813981">
        <id>Q9C029</id>
    </interactant>
    <interactant intactId="EBI-747107">
        <id>Q8IUQ4</id>
        <label>SIAH1</label>
    </interactant>
    <organismsDiffer>false</organismsDiffer>
    <experiments>3</experiments>
</comment>
<comment type="interaction">
    <interactant intactId="EBI-2813981">
        <id>Q9C029</id>
    </interactant>
    <interactant intactId="EBI-11992976">
        <id>Q8NBR0</id>
        <label>TP53I13</label>
    </interactant>
    <organismsDiffer>false</organismsDiffer>
    <experiments>3</experiments>
</comment>
<comment type="interaction">
    <interactant intactId="EBI-2813981">
        <id>Q9C029</id>
    </interactant>
    <interactant intactId="EBI-11059925">
        <id>Q8TBZ6</id>
        <label>TRMT10A</label>
    </interactant>
    <organismsDiffer>false</organismsDiffer>
    <experiments>3</experiments>
</comment>
<comment type="subcellular location">
    <subcellularLocation>
        <location evidence="12">Nucleus</location>
    </subcellularLocation>
    <subcellularLocation>
        <location evidence="11 12 14">Cytoplasm</location>
    </subcellularLocation>
    <subcellularLocation>
        <location evidence="11">Golgi apparatus</location>
    </subcellularLocation>
</comment>
<comment type="alternative products">
    <event type="alternative splicing"/>
    <isoform>
        <id>Q9C029-2</id>
        <name>1</name>
        <name>GNIP1</name>
        <sequence type="displayed"/>
    </isoform>
    <isoform>
        <id>Q9C029-3</id>
        <name>2</name>
        <name>GNIP2</name>
        <sequence type="described" ref="VSP_009020"/>
    </isoform>
    <isoform>
        <id>Q9C029-4</id>
        <name>3</name>
        <name>GNIP3</name>
        <sequence type="described" ref="VSP_009018 VSP_009019"/>
    </isoform>
    <isoform>
        <id>Q9C029-1</id>
        <name>4</name>
        <name>TRIM7</name>
        <sequence type="described" ref="VSP_009021 VSP_009022"/>
    </isoform>
</comment>
<comment type="tissue specificity">
    <text evidence="7">Skeletal muscle and placenta, at lower levels in heart, brain and pancreas. Isoform 1 is widely expressed with high level in testis, kidney and heart.</text>
</comment>
<comment type="domain">
    <text evidence="7">The B30.2 domain mediates interaction with GYG1.</text>
</comment>
<comment type="domain">
    <text evidence="7">The coiled-coil region mediates homodimerization and heterodimerization.</text>
</comment>
<comment type="PTM">
    <text evidence="9">Phosphorylated at Ser-107 by RPS6KA5/MSK1, which stimulates the ubiquitin ligase activity.</text>
</comment>
<comment type="PTM">
    <text evidence="16">Auto-ubiquitinates via 'Lys-63'-linked polyubiquitination.</text>
</comment>
<comment type="similarity">
    <text evidence="22">Belongs to the TRIM/RBCC family.</text>
</comment>
<gene>
    <name type="primary">TRIM7</name>
    <name type="synonym">GNIP</name>
    <name type="synonym">RNF90</name>
</gene>
<accession>Q9C029</accession>
<accession>A2RUE4</accession>
<accession>D3DWR7</accession>
<accession>Q969F5</accession>
<accession>Q96F67</accession>
<accession>Q96J89</accession>
<accession>Q96J90</accession>
<keyword id="KW-0002">3D-structure</keyword>
<keyword id="KW-0025">Alternative splicing</keyword>
<keyword id="KW-0051">Antiviral defense</keyword>
<keyword id="KW-0175">Coiled coil</keyword>
<keyword id="KW-0963">Cytoplasm</keyword>
<keyword id="KW-0333">Golgi apparatus</keyword>
<keyword id="KW-0479">Metal-binding</keyword>
<keyword id="KW-0539">Nucleus</keyword>
<keyword id="KW-0597">Phosphoprotein</keyword>
<keyword id="KW-1267">Proteomics identification</keyword>
<keyword id="KW-1185">Reference proteome</keyword>
<keyword id="KW-0808">Transferase</keyword>
<keyword id="KW-0832">Ubl conjugation</keyword>
<keyword id="KW-0833">Ubl conjugation pathway</keyword>
<keyword id="KW-0862">Zinc</keyword>
<keyword id="KW-0863">Zinc-finger</keyword>
<feature type="chain" id="PRO_0000056204" description="E3 ubiquitin-protein ligase TRIM7">
    <location>
        <begin position="1"/>
        <end position="511"/>
    </location>
</feature>
<feature type="domain" description="B30.2/SPRY" evidence="5">
    <location>
        <begin position="324"/>
        <end position="511"/>
    </location>
</feature>
<feature type="zinc finger region" description="RING-type" evidence="4">
    <location>
        <begin position="29"/>
        <end position="82"/>
    </location>
</feature>
<feature type="zinc finger region" description="B box-type" evidence="3">
    <location>
        <begin position="125"/>
        <end position="166"/>
    </location>
</feature>
<feature type="coiled-coil region" evidence="2">
    <location>
        <begin position="166"/>
        <end position="263"/>
    </location>
</feature>
<feature type="binding site" evidence="3">
    <location>
        <position position="130"/>
    </location>
    <ligand>
        <name>Zn(2+)</name>
        <dbReference type="ChEBI" id="CHEBI:29105"/>
    </ligand>
</feature>
<feature type="binding site" evidence="3">
    <location>
        <position position="133"/>
    </location>
    <ligand>
        <name>Zn(2+)</name>
        <dbReference type="ChEBI" id="CHEBI:29105"/>
    </ligand>
</feature>
<feature type="binding site" evidence="3">
    <location>
        <position position="152"/>
    </location>
    <ligand>
        <name>Zn(2+)</name>
        <dbReference type="ChEBI" id="CHEBI:29105"/>
    </ligand>
</feature>
<feature type="binding site" evidence="3">
    <location>
        <position position="158"/>
    </location>
    <ligand>
        <name>Zn(2+)</name>
        <dbReference type="ChEBI" id="CHEBI:29105"/>
    </ligand>
</feature>
<feature type="modified residue" description="Phosphoserine; by RPS6KA5" evidence="9">
    <location>
        <position position="107"/>
    </location>
</feature>
<feature type="splice variant" id="VSP_009020" description="In isoform 2." evidence="20">
    <location>
        <begin position="1"/>
        <end position="208"/>
    </location>
</feature>
<feature type="splice variant" id="VSP_009018" description="In isoform 3." evidence="20">
    <location>
        <begin position="1"/>
        <end position="182"/>
    </location>
</feature>
<feature type="splice variant" id="VSP_009019" description="In isoform 3." evidence="20">
    <original>VLKKELEDCEVFRSTEKKESKELL</original>
    <variation>MTQATGQMLCLHVQVPLQLLLLGQ</variation>
    <location>
        <begin position="183"/>
        <end position="206"/>
    </location>
</feature>
<feature type="splice variant" id="VSP_009021" description="In isoform 4." evidence="19 21">
    <original>KQMAAEQEKVGAEFQ</original>
    <variation>VSQAPAGPPWDITEA</variation>
    <location>
        <begin position="207"/>
        <end position="221"/>
    </location>
</feature>
<feature type="splice variant" id="VSP_009022" description="In isoform 4." evidence="19 21">
    <location>
        <begin position="222"/>
        <end position="511"/>
    </location>
</feature>
<feature type="sequence variant" id="VAR_017399" description="In dbSNP:rs3857300.">
    <original>A</original>
    <variation>S</variation>
    <location>
        <position position="18"/>
    </location>
</feature>
<feature type="sequence variant" id="VAR_017400" description="In dbSNP:rs2770946.">
    <original>P</original>
    <variation>S</variation>
    <location>
        <position position="73"/>
    </location>
</feature>
<feature type="sequence variant" id="VAR_017401" description="In dbSNP:rs2770945." evidence="8">
    <original>Q</original>
    <variation>E</variation>
    <location>
        <position position="95"/>
    </location>
</feature>
<feature type="sequence variant" id="VAR_052125" description="In dbSNP:rs416574.">
    <original>V</original>
    <variation>A</variation>
    <location>
        <position position="258"/>
    </location>
</feature>
<feature type="sequence variant" id="VAR_052126" description="In dbSNP:rs254460.">
    <original>G</original>
    <variation>S</variation>
    <location>
        <position position="363"/>
    </location>
</feature>
<feature type="mutagenesis site" description="Abolishes ubiquitination and stabilization of RNF187; when associated with A-32." evidence="9 18">
    <original>C</original>
    <variation>A</variation>
    <location>
        <position position="29"/>
    </location>
</feature>
<feature type="mutagenesis site" description="Abolishes ubiquitination and stabilization of RNF187; when associated with A-29." evidence="9 18">
    <original>C</original>
    <variation>A</variation>
    <location>
        <position position="32"/>
    </location>
</feature>
<feature type="mutagenesis site" description="Abolishes ubiquitination and stabilization of RNF187." evidence="9">
    <original>W</original>
    <variation>A</variation>
    <location>
        <position position="57"/>
    </location>
</feature>
<feature type="mutagenesis site" description="Abolishes phosphorylation by RPS6KA5/MSK1. Reduced ubiquitination activity towards RNF187." evidence="9">
    <original>S</original>
    <variation>A</variation>
    <location>
        <position position="107"/>
    </location>
</feature>
<feature type="mutagenesis site" description="Complete loss of substrate binding." evidence="16">
    <original>N</original>
    <variation>A</variation>
    <location>
        <position position="383"/>
    </location>
</feature>
<feature type="mutagenesis site" description="Complete loss of substrate binding." evidence="16">
    <original>R</original>
    <variation>A</variation>
    <location>
        <position position="385"/>
    </location>
</feature>
<feature type="mutagenesis site" description="Complete loss of interaction with GYG1." evidence="13">
    <original>L</original>
    <variation>A</variation>
    <location>
        <position position="423"/>
    </location>
</feature>
<feature type="mutagenesis site" description="Complete loss of substrate binding." evidence="16">
    <original>F</original>
    <variation>A</variation>
    <location>
        <position position="426"/>
    </location>
</feature>
<feature type="mutagenesis site" description="Complete loss of substrate binding." evidence="16">
    <original>Q</original>
    <variation>A</variation>
    <location>
        <position position="436"/>
    </location>
</feature>
<feature type="mutagenesis site" description="Complete loss of interaction with GYG1." evidence="13">
    <original>S</original>
    <variation>A</variation>
    <location>
        <position position="499"/>
    </location>
</feature>
<feature type="mutagenesis site" description="Complete loss of interaction with GYG1." evidence="13">
    <original>C</original>
    <variation>A</variation>
    <location>
        <position position="501"/>
    </location>
</feature>
<feature type="turn" evidence="37">
    <location>
        <begin position="348"/>
        <end position="350"/>
    </location>
</feature>
<feature type="strand" evidence="37">
    <location>
        <begin position="355"/>
        <end position="357"/>
    </location>
</feature>
<feature type="strand" evidence="37">
    <location>
        <begin position="363"/>
        <end position="366"/>
    </location>
</feature>
<feature type="strand" evidence="40">
    <location>
        <begin position="377"/>
        <end position="379"/>
    </location>
</feature>
<feature type="strand" evidence="37">
    <location>
        <begin position="381"/>
        <end position="383"/>
    </location>
</feature>
<feature type="strand" evidence="37">
    <location>
        <begin position="385"/>
        <end position="389"/>
    </location>
</feature>
<feature type="strand" evidence="37">
    <location>
        <begin position="392"/>
        <end position="403"/>
    </location>
</feature>
<feature type="strand" evidence="37">
    <location>
        <begin position="405"/>
        <end position="407"/>
    </location>
</feature>
<feature type="strand" evidence="37">
    <location>
        <begin position="409"/>
        <end position="415"/>
    </location>
</feature>
<feature type="strand" evidence="39">
    <location>
        <begin position="421"/>
        <end position="423"/>
    </location>
</feature>
<feature type="helix" evidence="37">
    <location>
        <begin position="428"/>
        <end position="430"/>
    </location>
</feature>
<feature type="strand" evidence="37">
    <location>
        <begin position="432"/>
        <end position="438"/>
    </location>
</feature>
<feature type="strand" evidence="37">
    <location>
        <begin position="441"/>
        <end position="444"/>
    </location>
</feature>
<feature type="strand" evidence="37">
    <location>
        <begin position="447"/>
        <end position="449"/>
    </location>
</feature>
<feature type="strand" evidence="38">
    <location>
        <begin position="451"/>
        <end position="453"/>
    </location>
</feature>
<feature type="strand" evidence="37">
    <location>
        <begin position="459"/>
        <end position="466"/>
    </location>
</feature>
<feature type="turn" evidence="37">
    <location>
        <begin position="467"/>
        <end position="470"/>
    </location>
</feature>
<feature type="strand" evidence="37">
    <location>
        <begin position="471"/>
        <end position="476"/>
    </location>
</feature>
<feature type="turn" evidence="37">
    <location>
        <begin position="477"/>
        <end position="479"/>
    </location>
</feature>
<feature type="strand" evidence="37">
    <location>
        <begin position="482"/>
        <end position="487"/>
    </location>
</feature>
<feature type="strand" evidence="37">
    <location>
        <begin position="494"/>
        <end position="500"/>
    </location>
</feature>
<feature type="strand" evidence="38">
    <location>
        <begin position="502"/>
        <end position="504"/>
    </location>
</feature>
<feature type="strand" evidence="37">
    <location>
        <begin position="507"/>
        <end position="509"/>
    </location>
</feature>